<comment type="function">
    <text>PPIases accelerate the folding of proteins. It catalyzes the cis-trans isomerization of proline imidic peptide bonds in oligopeptides.</text>
</comment>
<comment type="catalytic activity">
    <reaction>
        <text>[protein]-peptidylproline (omega=180) = [protein]-peptidylproline (omega=0)</text>
        <dbReference type="Rhea" id="RHEA:16237"/>
        <dbReference type="Rhea" id="RHEA-COMP:10747"/>
        <dbReference type="Rhea" id="RHEA-COMP:10748"/>
        <dbReference type="ChEBI" id="CHEBI:83833"/>
        <dbReference type="ChEBI" id="CHEBI:83834"/>
        <dbReference type="EC" id="5.2.1.8"/>
    </reaction>
</comment>
<comment type="subcellular location">
    <subcellularLocation>
        <location evidence="3">Membrane</location>
        <topology evidence="3">Single-pass membrane protein</topology>
    </subcellularLocation>
</comment>
<gene>
    <name type="primary">CPR4</name>
    <name type="synonym">CYP4</name>
    <name type="synonym">SCC3</name>
    <name type="ordered locus">YCR069W</name>
    <name type="ORF">YCR69W/YCR70W</name>
</gene>
<protein>
    <recommendedName>
        <fullName>Peptidyl-prolyl cis-trans isomerase CPR4</fullName>
        <shortName>PPIase CPR4</shortName>
        <ecNumber>5.2.1.8</ecNumber>
    </recommendedName>
    <alternativeName>
        <fullName>Rotamase</fullName>
    </alternativeName>
</protein>
<organism>
    <name type="scientific">Saccharomyces cerevisiae (strain ATCC 204508 / S288c)</name>
    <name type="common">Baker's yeast</name>
    <dbReference type="NCBI Taxonomy" id="559292"/>
    <lineage>
        <taxon>Eukaryota</taxon>
        <taxon>Fungi</taxon>
        <taxon>Dikarya</taxon>
        <taxon>Ascomycota</taxon>
        <taxon>Saccharomycotina</taxon>
        <taxon>Saccharomycetes</taxon>
        <taxon>Saccharomycetales</taxon>
        <taxon>Saccharomycetaceae</taxon>
        <taxon>Saccharomyces</taxon>
    </lineage>
</organism>
<sequence length="318" mass="35780">MWLKSLLLCLYSLVLCQVHAAPSSGKQITSKDVDLQKKYEPSPPATHRGIITIEYFDPVSKSMKEADLTFELYGTVVPKTVNNFAMLAHGVKAVIEGKDPNDIHTYSYRKTKINKVYPNKYIQGGVVAPDVGPFTVYGPKFDDENFYLKHDRPERLAMAYFGPDSNTSEFIITTKADGNEELDGKSVVFGQITSGLDQLMDAIQYTETDEYGKPQHELRFLYFVLEILKISNILDLHAAYTEKVEKFRNGDVSVGSTLENIFRNDKAYTPLTTSTGTTAYDLNHPISRALMCLTVLGLCFIAYKGMHEKPHTVSLRHK</sequence>
<accession>P25334</accession>
<accession>D6VR72</accession>
<accession>P25658</accession>
<feature type="signal peptide" evidence="1">
    <location>
        <begin position="1"/>
        <end position="20"/>
    </location>
</feature>
<feature type="chain" id="PRO_0000025494" description="Peptidyl-prolyl cis-trans isomerase CPR4">
    <location>
        <begin position="21"/>
        <end position="318"/>
    </location>
</feature>
<feature type="transmembrane region" description="Helical" evidence="1">
    <location>
        <begin position="286"/>
        <end position="303"/>
    </location>
</feature>
<feature type="domain" description="PPIase cyclophilin-type" evidence="2">
    <location>
        <begin position="55"/>
        <end position="225"/>
    </location>
</feature>
<feature type="glycosylation site" description="N-linked (GlcNAc...) asparagine" evidence="1">
    <location>
        <position position="166"/>
    </location>
</feature>
<evidence type="ECO:0000255" key="1"/>
<evidence type="ECO:0000255" key="2">
    <source>
        <dbReference type="PROSITE-ProRule" id="PRU00156"/>
    </source>
</evidence>
<evidence type="ECO:0000305" key="3"/>
<name>CYPR_YEAST</name>
<reference key="1">
    <citation type="journal article" date="1991" name="Yeast">
        <title>The nucleotide sequence of a third cyclophilin-homologous gene from Saccharomyces cerevisiae.</title>
        <authorList>
            <person name="Franco L."/>
            <person name="Jimenez A."/>
            <person name="Demolder J."/>
            <person name="Molemans F."/>
            <person name="Contreras R."/>
        </authorList>
    </citation>
    <scope>NUCLEOTIDE SEQUENCE [GENOMIC DNA]</scope>
</reference>
<reference key="2">
    <citation type="journal article" date="1992" name="Nature">
        <title>The complete DNA sequence of yeast chromosome III.</title>
        <authorList>
            <person name="Oliver S.G."/>
            <person name="van der Aart Q.J.M."/>
            <person name="Agostoni-Carbone M.L."/>
            <person name="Aigle M."/>
            <person name="Alberghina L."/>
            <person name="Alexandraki D."/>
            <person name="Antoine G."/>
            <person name="Anwar R."/>
            <person name="Ballesta J.P.G."/>
            <person name="Benit P."/>
            <person name="Berben G."/>
            <person name="Bergantino E."/>
            <person name="Biteau N."/>
            <person name="Bolle P.-A."/>
            <person name="Bolotin-Fukuhara M."/>
            <person name="Brown A."/>
            <person name="Brown A.J.P."/>
            <person name="Buhler J.-M."/>
            <person name="Carcano C."/>
            <person name="Carignani G."/>
            <person name="Cederberg H."/>
            <person name="Chanet R."/>
            <person name="Contreras R."/>
            <person name="Crouzet M."/>
            <person name="Daignan-Fornier B."/>
            <person name="Defoor E."/>
            <person name="Delgado M.D."/>
            <person name="Demolder J."/>
            <person name="Doira C."/>
            <person name="Dubois E."/>
            <person name="Dujon B."/>
            <person name="Duesterhoeft A."/>
            <person name="Erdmann D."/>
            <person name="Esteban M."/>
            <person name="Fabre F."/>
            <person name="Fairhead C."/>
            <person name="Faye G."/>
            <person name="Feldmann H."/>
            <person name="Fiers W."/>
            <person name="Francingues-Gaillard M.-C."/>
            <person name="Franco L."/>
            <person name="Frontali L."/>
            <person name="Fukuhara H."/>
            <person name="Fuller L.J."/>
            <person name="Galland P."/>
            <person name="Gent M.E."/>
            <person name="Gigot D."/>
            <person name="Gilliquet V."/>
            <person name="Glansdorff N."/>
            <person name="Goffeau A."/>
            <person name="Grenson M."/>
            <person name="Grisanti P."/>
            <person name="Grivell L.A."/>
            <person name="de Haan M."/>
            <person name="Haasemann M."/>
            <person name="Hatat D."/>
            <person name="Hoenicka J."/>
            <person name="Hegemann J.H."/>
            <person name="Herbert C.J."/>
            <person name="Hilger F."/>
            <person name="Hohmann S."/>
            <person name="Hollenberg C.P."/>
            <person name="Huse K."/>
            <person name="Iborra F."/>
            <person name="Indge K.J."/>
            <person name="Isono K."/>
            <person name="Jacq C."/>
            <person name="Jacquet M."/>
            <person name="James C.M."/>
            <person name="Jauniaux J.-C."/>
            <person name="Jia Y."/>
            <person name="Jimenez A."/>
            <person name="Kelly A."/>
            <person name="Kleinhans U."/>
            <person name="Kreisl P."/>
            <person name="Lanfranchi G."/>
            <person name="Lewis C."/>
            <person name="van der Linden C.G."/>
            <person name="Lucchini G."/>
            <person name="Lutzenkirchen K."/>
            <person name="Maat M.J."/>
            <person name="Mallet L."/>
            <person name="Mannhaupt G."/>
            <person name="Martegani E."/>
            <person name="Mathieu A."/>
            <person name="Maurer C.T.C."/>
            <person name="McConnell D."/>
            <person name="McKee R.A."/>
            <person name="Messenguy F."/>
            <person name="Mewes H.-W."/>
            <person name="Molemans F."/>
            <person name="Montague M.A."/>
            <person name="Muzi Falconi M."/>
            <person name="Navas L."/>
            <person name="Newlon C.S."/>
            <person name="Noone D."/>
            <person name="Pallier C."/>
            <person name="Panzeri L."/>
            <person name="Pearson B.M."/>
            <person name="Perea J."/>
            <person name="Philippsen P."/>
            <person name="Pierard A."/>
            <person name="Planta R.J."/>
            <person name="Plevani P."/>
            <person name="Poetsch B."/>
            <person name="Pohl F.M."/>
            <person name="Purnelle B."/>
            <person name="Ramezani Rad M."/>
            <person name="Rasmussen S.W."/>
            <person name="Raynal A."/>
            <person name="Remacha M.A."/>
            <person name="Richterich P."/>
            <person name="Roberts A.B."/>
            <person name="Rodriguez F."/>
            <person name="Sanz E."/>
            <person name="Schaaff-Gerstenschlaeger I."/>
            <person name="Scherens B."/>
            <person name="Schweitzer B."/>
            <person name="Shu Y."/>
            <person name="Skala J."/>
            <person name="Slonimski P.P."/>
            <person name="Sor F."/>
            <person name="Soustelle C."/>
            <person name="Spiegelberg R."/>
            <person name="Stateva L.I."/>
            <person name="Steensma H.Y."/>
            <person name="Steiner S."/>
            <person name="Thierry A."/>
            <person name="Thireos G."/>
            <person name="Tzermia M."/>
            <person name="Urrestarazu L.A."/>
            <person name="Valle G."/>
            <person name="Vetter I."/>
            <person name="van Vliet-Reedijk J.C."/>
            <person name="Voet M."/>
            <person name="Volckaert G."/>
            <person name="Vreken P."/>
            <person name="Wang H."/>
            <person name="Warmington J.R."/>
            <person name="von Wettstein D."/>
            <person name="Wicksteed B.L."/>
            <person name="Wilson C."/>
            <person name="Wurst H."/>
            <person name="Xu G."/>
            <person name="Yoshikawa A."/>
            <person name="Zimmermann F.K."/>
            <person name="Sgouros J.G."/>
        </authorList>
    </citation>
    <scope>NUCLEOTIDE SEQUENCE [LARGE SCALE GENOMIC DNA]</scope>
    <source>
        <strain>ATCC 204508 / S288c</strain>
    </source>
</reference>
<reference key="3">
    <citation type="journal article" date="2014" name="G3 (Bethesda)">
        <title>The reference genome sequence of Saccharomyces cerevisiae: Then and now.</title>
        <authorList>
            <person name="Engel S.R."/>
            <person name="Dietrich F.S."/>
            <person name="Fisk D.G."/>
            <person name="Binkley G."/>
            <person name="Balakrishnan R."/>
            <person name="Costanzo M.C."/>
            <person name="Dwight S.S."/>
            <person name="Hitz B.C."/>
            <person name="Karra K."/>
            <person name="Nash R.S."/>
            <person name="Weng S."/>
            <person name="Wong E.D."/>
            <person name="Lloyd P."/>
            <person name="Skrzypek M.S."/>
            <person name="Miyasato S.R."/>
            <person name="Simison M."/>
            <person name="Cherry J.M."/>
        </authorList>
    </citation>
    <scope>GENOME REANNOTATION</scope>
    <source>
        <strain>ATCC 204508 / S288c</strain>
    </source>
</reference>
<reference key="4">
    <citation type="journal article" date="2007" name="Genome Res.">
        <title>Approaching a complete repository of sequence-verified protein-encoding clones for Saccharomyces cerevisiae.</title>
        <authorList>
            <person name="Hu Y."/>
            <person name="Rolfs A."/>
            <person name="Bhullar B."/>
            <person name="Murthy T.V.S."/>
            <person name="Zhu C."/>
            <person name="Berger M.F."/>
            <person name="Camargo A.A."/>
            <person name="Kelley F."/>
            <person name="McCarron S."/>
            <person name="Jepson D."/>
            <person name="Richardson A."/>
            <person name="Raphael J."/>
            <person name="Moreira D."/>
            <person name="Taycher E."/>
            <person name="Zuo D."/>
            <person name="Mohr S."/>
            <person name="Kane M.F."/>
            <person name="Williamson J."/>
            <person name="Simpson A.J.G."/>
            <person name="Bulyk M.L."/>
            <person name="Harlow E."/>
            <person name="Marsischky G."/>
            <person name="Kolodner R.D."/>
            <person name="LaBaer J."/>
        </authorList>
    </citation>
    <scope>NUCLEOTIDE SEQUENCE [GENOMIC DNA]</scope>
    <source>
        <strain>ATCC 204508 / S288c</strain>
    </source>
</reference>
<dbReference type="EC" id="5.2.1.8"/>
<dbReference type="EMBL" id="X59720">
    <property type="protein sequence ID" value="CAA42275.1"/>
    <property type="molecule type" value="Genomic_DNA"/>
</dbReference>
<dbReference type="EMBL" id="AY558152">
    <property type="protein sequence ID" value="AAS56478.1"/>
    <property type="molecule type" value="Genomic_DNA"/>
</dbReference>
<dbReference type="EMBL" id="BK006937">
    <property type="protein sequence ID" value="DAA07541.1"/>
    <property type="molecule type" value="Genomic_DNA"/>
</dbReference>
<dbReference type="PIR" id="S26658">
    <property type="entry name" value="CSBYC3"/>
</dbReference>
<dbReference type="RefSeq" id="NP_009995.1">
    <property type="nucleotide sequence ID" value="NM_001178780.1"/>
</dbReference>
<dbReference type="SMR" id="P25334"/>
<dbReference type="BioGRID" id="31045">
    <property type="interactions" value="50"/>
</dbReference>
<dbReference type="FunCoup" id="P25334">
    <property type="interactions" value="75"/>
</dbReference>
<dbReference type="IntAct" id="P25334">
    <property type="interactions" value="5"/>
</dbReference>
<dbReference type="MINT" id="P25334"/>
<dbReference type="STRING" id="4932.YCR069W"/>
<dbReference type="GlyCosmos" id="P25334">
    <property type="glycosylation" value="1 site, No reported glycans"/>
</dbReference>
<dbReference type="GlyGen" id="P25334">
    <property type="glycosylation" value="1 site"/>
</dbReference>
<dbReference type="iPTMnet" id="P25334"/>
<dbReference type="PaxDb" id="4932-YCR069W"/>
<dbReference type="PeptideAtlas" id="P25334"/>
<dbReference type="EnsemblFungi" id="YCR069W_mRNA">
    <property type="protein sequence ID" value="YCR069W"/>
    <property type="gene ID" value="YCR069W"/>
</dbReference>
<dbReference type="GeneID" id="850433"/>
<dbReference type="KEGG" id="sce:YCR069W"/>
<dbReference type="AGR" id="SGD:S000000665"/>
<dbReference type="SGD" id="S000000665">
    <property type="gene designation" value="CPR4"/>
</dbReference>
<dbReference type="VEuPathDB" id="FungiDB:YCR069W"/>
<dbReference type="eggNOG" id="KOG0880">
    <property type="taxonomic scope" value="Eukaryota"/>
</dbReference>
<dbReference type="HOGENOM" id="CLU_012062_4_1_1"/>
<dbReference type="InParanoid" id="P25334"/>
<dbReference type="OMA" id="LYEPNPP"/>
<dbReference type="OrthoDB" id="193499at2759"/>
<dbReference type="BioCyc" id="YEAST:YCR069W-MONOMER"/>
<dbReference type="BioGRID-ORCS" id="850433">
    <property type="hits" value="5 hits in 10 CRISPR screens"/>
</dbReference>
<dbReference type="PRO" id="PR:P25334"/>
<dbReference type="Proteomes" id="UP000002311">
    <property type="component" value="Chromosome III"/>
</dbReference>
<dbReference type="RNAct" id="P25334">
    <property type="molecule type" value="protein"/>
</dbReference>
<dbReference type="GO" id="GO:0005737">
    <property type="term" value="C:cytoplasm"/>
    <property type="evidence" value="ECO:0000318"/>
    <property type="project" value="GO_Central"/>
</dbReference>
<dbReference type="GO" id="GO:0005783">
    <property type="term" value="C:endoplasmic reticulum"/>
    <property type="evidence" value="ECO:0000318"/>
    <property type="project" value="GO_Central"/>
</dbReference>
<dbReference type="GO" id="GO:0000324">
    <property type="term" value="C:fungal-type vacuole"/>
    <property type="evidence" value="ECO:0007005"/>
    <property type="project" value="SGD"/>
</dbReference>
<dbReference type="GO" id="GO:0016020">
    <property type="term" value="C:membrane"/>
    <property type="evidence" value="ECO:0007669"/>
    <property type="project" value="UniProtKB-SubCell"/>
</dbReference>
<dbReference type="GO" id="GO:0016018">
    <property type="term" value="F:cyclosporin A binding"/>
    <property type="evidence" value="ECO:0000318"/>
    <property type="project" value="GO_Central"/>
</dbReference>
<dbReference type="GO" id="GO:0003755">
    <property type="term" value="F:peptidyl-prolyl cis-trans isomerase activity"/>
    <property type="evidence" value="ECO:0000250"/>
    <property type="project" value="SGD"/>
</dbReference>
<dbReference type="GO" id="GO:0006457">
    <property type="term" value="P:protein folding"/>
    <property type="evidence" value="ECO:0000318"/>
    <property type="project" value="GO_Central"/>
</dbReference>
<dbReference type="CDD" id="cd00317">
    <property type="entry name" value="cyclophilin"/>
    <property type="match status" value="1"/>
</dbReference>
<dbReference type="FunFam" id="2.40.100.10:FF:000064">
    <property type="entry name" value="Peptidyl-prolyl cis-trans isomerase CPR4"/>
    <property type="match status" value="1"/>
</dbReference>
<dbReference type="Gene3D" id="2.40.100.10">
    <property type="entry name" value="Cyclophilin-like"/>
    <property type="match status" value="1"/>
</dbReference>
<dbReference type="InterPro" id="IPR029000">
    <property type="entry name" value="Cyclophilin-like_dom_sf"/>
</dbReference>
<dbReference type="InterPro" id="IPR002130">
    <property type="entry name" value="Cyclophilin-type_PPIase_dom"/>
</dbReference>
<dbReference type="PANTHER" id="PTHR11071">
    <property type="entry name" value="PEPTIDYL-PROLYL CIS-TRANS ISOMERASE"/>
    <property type="match status" value="1"/>
</dbReference>
<dbReference type="PANTHER" id="PTHR11071:SF568">
    <property type="entry name" value="PEPTIDYL-PROLYL CIS-TRANS ISOMERASE CPR4-RELATED"/>
    <property type="match status" value="1"/>
</dbReference>
<dbReference type="Pfam" id="PF00160">
    <property type="entry name" value="Pro_isomerase"/>
    <property type="match status" value="1"/>
</dbReference>
<dbReference type="PRINTS" id="PR00153">
    <property type="entry name" value="CSAPPISMRASE"/>
</dbReference>
<dbReference type="SUPFAM" id="SSF50891">
    <property type="entry name" value="Cyclophilin-like"/>
    <property type="match status" value="1"/>
</dbReference>
<dbReference type="PROSITE" id="PS50072">
    <property type="entry name" value="CSA_PPIASE_2"/>
    <property type="match status" value="1"/>
</dbReference>
<keyword id="KW-0325">Glycoprotein</keyword>
<keyword id="KW-0413">Isomerase</keyword>
<keyword id="KW-0472">Membrane</keyword>
<keyword id="KW-1185">Reference proteome</keyword>
<keyword id="KW-0697">Rotamase</keyword>
<keyword id="KW-0732">Signal</keyword>
<keyword id="KW-0812">Transmembrane</keyword>
<keyword id="KW-1133">Transmembrane helix</keyword>
<proteinExistence type="inferred from homology"/>